<accession>Q7NAM4</accession>
<organism>
    <name type="scientific">Mycoplasmoides gallisepticum (strain R(low / passage 15 / clone 2))</name>
    <name type="common">Mycoplasma gallisepticum</name>
    <dbReference type="NCBI Taxonomy" id="710127"/>
    <lineage>
        <taxon>Bacteria</taxon>
        <taxon>Bacillati</taxon>
        <taxon>Mycoplasmatota</taxon>
        <taxon>Mycoplasmoidales</taxon>
        <taxon>Mycoplasmoidaceae</taxon>
        <taxon>Mycoplasmoides</taxon>
    </lineage>
</organism>
<proteinExistence type="inferred from homology"/>
<evidence type="ECO:0000255" key="1">
    <source>
        <dbReference type="HAMAP-Rule" id="MF_00503"/>
    </source>
</evidence>
<evidence type="ECO:0000305" key="2"/>
<gene>
    <name evidence="1" type="primary">rplI</name>
    <name type="ordered locus">MYCGA6120</name>
    <name type="ORF">MGA_0420</name>
</gene>
<sequence length="147" mass="16675">MKVILLKDVPSLGKADSVVNVANGYAKNFLFKNKLAEPYTERGQKRLDLKVIKRNEQHDLLALEAKNLAKQLEGVVLEYDIRTNEEDKAFGTIGFKQIVDDLSKKHIFVTKDMLDSKMKLDIGEHRVKINIFEGIHATILVKVSKAQ</sequence>
<dbReference type="EMBL" id="AE015450">
    <property type="protein sequence ID" value="AAP56962.1"/>
    <property type="molecule type" value="Genomic_DNA"/>
</dbReference>
<dbReference type="RefSeq" id="WP_011113871.1">
    <property type="nucleotide sequence ID" value="NC_004829.2"/>
</dbReference>
<dbReference type="SMR" id="Q7NAM4"/>
<dbReference type="GeneID" id="93510448"/>
<dbReference type="KEGG" id="mga:MGA_0420"/>
<dbReference type="HOGENOM" id="CLU_078938_3_1_14"/>
<dbReference type="OrthoDB" id="9788336at2"/>
<dbReference type="Proteomes" id="UP000001418">
    <property type="component" value="Chromosome"/>
</dbReference>
<dbReference type="GO" id="GO:1990904">
    <property type="term" value="C:ribonucleoprotein complex"/>
    <property type="evidence" value="ECO:0007669"/>
    <property type="project" value="UniProtKB-KW"/>
</dbReference>
<dbReference type="GO" id="GO:0005840">
    <property type="term" value="C:ribosome"/>
    <property type="evidence" value="ECO:0007669"/>
    <property type="project" value="UniProtKB-KW"/>
</dbReference>
<dbReference type="GO" id="GO:0019843">
    <property type="term" value="F:rRNA binding"/>
    <property type="evidence" value="ECO:0007669"/>
    <property type="project" value="UniProtKB-UniRule"/>
</dbReference>
<dbReference type="GO" id="GO:0003735">
    <property type="term" value="F:structural constituent of ribosome"/>
    <property type="evidence" value="ECO:0007669"/>
    <property type="project" value="InterPro"/>
</dbReference>
<dbReference type="GO" id="GO:0006412">
    <property type="term" value="P:translation"/>
    <property type="evidence" value="ECO:0007669"/>
    <property type="project" value="UniProtKB-UniRule"/>
</dbReference>
<dbReference type="Gene3D" id="3.10.430.100">
    <property type="entry name" value="Ribosomal protein L9, C-terminal domain"/>
    <property type="match status" value="1"/>
</dbReference>
<dbReference type="Gene3D" id="3.40.5.10">
    <property type="entry name" value="Ribosomal protein L9, N-terminal domain"/>
    <property type="match status" value="1"/>
</dbReference>
<dbReference type="HAMAP" id="MF_00503">
    <property type="entry name" value="Ribosomal_bL9"/>
    <property type="match status" value="1"/>
</dbReference>
<dbReference type="InterPro" id="IPR000244">
    <property type="entry name" value="Ribosomal_bL9"/>
</dbReference>
<dbReference type="InterPro" id="IPR009027">
    <property type="entry name" value="Ribosomal_bL9/RNase_H1_N"/>
</dbReference>
<dbReference type="InterPro" id="IPR020594">
    <property type="entry name" value="Ribosomal_bL9_bac/chp"/>
</dbReference>
<dbReference type="InterPro" id="IPR020069">
    <property type="entry name" value="Ribosomal_bL9_C"/>
</dbReference>
<dbReference type="InterPro" id="IPR036791">
    <property type="entry name" value="Ribosomal_bL9_C_sf"/>
</dbReference>
<dbReference type="InterPro" id="IPR020070">
    <property type="entry name" value="Ribosomal_bL9_N"/>
</dbReference>
<dbReference type="InterPro" id="IPR036935">
    <property type="entry name" value="Ribosomal_bL9_N_sf"/>
</dbReference>
<dbReference type="NCBIfam" id="TIGR00158">
    <property type="entry name" value="L9"/>
    <property type="match status" value="1"/>
</dbReference>
<dbReference type="PANTHER" id="PTHR21368">
    <property type="entry name" value="50S RIBOSOMAL PROTEIN L9"/>
    <property type="match status" value="1"/>
</dbReference>
<dbReference type="Pfam" id="PF03948">
    <property type="entry name" value="Ribosomal_L9_C"/>
    <property type="match status" value="1"/>
</dbReference>
<dbReference type="Pfam" id="PF01281">
    <property type="entry name" value="Ribosomal_L9_N"/>
    <property type="match status" value="1"/>
</dbReference>
<dbReference type="SUPFAM" id="SSF55658">
    <property type="entry name" value="L9 N-domain-like"/>
    <property type="match status" value="1"/>
</dbReference>
<dbReference type="SUPFAM" id="SSF55653">
    <property type="entry name" value="Ribosomal protein L9 C-domain"/>
    <property type="match status" value="1"/>
</dbReference>
<protein>
    <recommendedName>
        <fullName evidence="1">Large ribosomal subunit protein bL9</fullName>
    </recommendedName>
    <alternativeName>
        <fullName evidence="2">50S ribosomal protein L9</fullName>
    </alternativeName>
</protein>
<name>RL9_MYCGA</name>
<keyword id="KW-1185">Reference proteome</keyword>
<keyword id="KW-0687">Ribonucleoprotein</keyword>
<keyword id="KW-0689">Ribosomal protein</keyword>
<keyword id="KW-0694">RNA-binding</keyword>
<keyword id="KW-0699">rRNA-binding</keyword>
<comment type="function">
    <text evidence="1">Binds to the 23S rRNA.</text>
</comment>
<comment type="similarity">
    <text evidence="1">Belongs to the bacterial ribosomal protein bL9 family.</text>
</comment>
<feature type="chain" id="PRO_0000258467" description="Large ribosomal subunit protein bL9">
    <location>
        <begin position="1"/>
        <end position="147"/>
    </location>
</feature>
<reference key="1">
    <citation type="journal article" date="2003" name="Microbiology">
        <title>The complete genome sequence of the avian pathogen Mycoplasma gallisepticum strain R(low).</title>
        <authorList>
            <person name="Papazisi L."/>
            <person name="Gorton T.S."/>
            <person name="Kutish G."/>
            <person name="Markham P.F."/>
            <person name="Browning G.F."/>
            <person name="Nguyen D.K."/>
            <person name="Swartzell S."/>
            <person name="Madan A."/>
            <person name="Mahairas G."/>
            <person name="Geary S.J."/>
        </authorList>
    </citation>
    <scope>NUCLEOTIDE SEQUENCE [LARGE SCALE GENOMIC DNA]</scope>
    <source>
        <strain>R(low / passage 15 / clone 2)</strain>
    </source>
</reference>